<organism>
    <name type="scientific">Escherichia coli O6:H1 (strain CFT073 / ATCC 700928 / UPEC)</name>
    <dbReference type="NCBI Taxonomy" id="199310"/>
    <lineage>
        <taxon>Bacteria</taxon>
        <taxon>Pseudomonadati</taxon>
        <taxon>Pseudomonadota</taxon>
        <taxon>Gammaproteobacteria</taxon>
        <taxon>Enterobacterales</taxon>
        <taxon>Enterobacteriaceae</taxon>
        <taxon>Escherichia</taxon>
    </lineage>
</organism>
<comment type="function">
    <text evidence="1">Molecular chaperone. Has ATPase activity.</text>
</comment>
<comment type="subunit">
    <text evidence="1">Homodimer.</text>
</comment>
<comment type="subcellular location">
    <subcellularLocation>
        <location evidence="1">Cytoplasm</location>
    </subcellularLocation>
</comment>
<comment type="similarity">
    <text evidence="1">Belongs to the heat shock protein 90 family.</text>
</comment>
<proteinExistence type="inferred from homology"/>
<gene>
    <name evidence="1" type="primary">htpG</name>
    <name type="ordered locus">c0593</name>
</gene>
<keyword id="KW-0067">ATP-binding</keyword>
<keyword id="KW-0143">Chaperone</keyword>
<keyword id="KW-0963">Cytoplasm</keyword>
<keyword id="KW-0547">Nucleotide-binding</keyword>
<keyword id="KW-1185">Reference proteome</keyword>
<keyword id="KW-0346">Stress response</keyword>
<sequence length="624" mass="71423">MKGQETRGFQSEVKQLLHLMIHSLYSNKEIFLRELISNASDAADKLRFRALSNPDLYEGDGELRVRVSFDKDKRTLTISDNGVGMTRDEVIDHLGTIAKSGTKSFLESLGSDQAKDSQLIGQFGVGFYSAFIVADKVTVRTRAAGEKPENGVFWESAGEGEYTVADITKEDRGTEITLHLREGEDEFLDDWRVRSIISKYSDHIALPVEIEKREEKDGETVISWEKINKAQALWTRNKSEITDEEYKEFYKHIAHDFNDPLTWSHNRVEGKQEYTSLLYIPSQAPWDMWNRDHKHGLKLYVQRVFIMDDAEQFMPNYLRFVRGLIDSSDLPLNVSREILQDSTVTRNLRNALTKRVLQMLEKLAKDDAEKYQTFWQQFGLVLKEGPAEDFANQEAIAKLLRFASTHTDSSAQTVSLEDYVSRMKEGQEKIYYITADSYAAAKSSPHLELLRKKGIEVLLLSDRIDEWMMNYLTEFDGKPFQSVSKVDESLEKLADEVDESAKEAEKALTPFIDRVKALLGERVKDVRLTHRLTDTPAIVSTDADEMSTQMAKLFAAAGQKVPEVKYIFELNPDHVLVKRAADTEDEAKFSEWVELLLDQALLAERGTLEDPNLFIRRMNQLLVS</sequence>
<accession>P0A6Z4</accession>
<accession>P10413</accession>
<evidence type="ECO:0000255" key="1">
    <source>
        <dbReference type="HAMAP-Rule" id="MF_00505"/>
    </source>
</evidence>
<reference key="1">
    <citation type="journal article" date="2002" name="Proc. Natl. Acad. Sci. U.S.A.">
        <title>Extensive mosaic structure revealed by the complete genome sequence of uropathogenic Escherichia coli.</title>
        <authorList>
            <person name="Welch R.A."/>
            <person name="Burland V."/>
            <person name="Plunkett G. III"/>
            <person name="Redford P."/>
            <person name="Roesch P."/>
            <person name="Rasko D."/>
            <person name="Buckles E.L."/>
            <person name="Liou S.-R."/>
            <person name="Boutin A."/>
            <person name="Hackett J."/>
            <person name="Stroud D."/>
            <person name="Mayhew G.F."/>
            <person name="Rose D.J."/>
            <person name="Zhou S."/>
            <person name="Schwartz D.C."/>
            <person name="Perna N.T."/>
            <person name="Mobley H.L.T."/>
            <person name="Donnenberg M.S."/>
            <person name="Blattner F.R."/>
        </authorList>
    </citation>
    <scope>NUCLEOTIDE SEQUENCE [LARGE SCALE GENOMIC DNA]</scope>
    <source>
        <strain>CFT073 / ATCC 700928 / UPEC</strain>
    </source>
</reference>
<dbReference type="EMBL" id="AE014075">
    <property type="protein sequence ID" value="AAN79071.1"/>
    <property type="molecule type" value="Genomic_DNA"/>
</dbReference>
<dbReference type="RefSeq" id="WP_000678201.1">
    <property type="nucleotide sequence ID" value="NZ_CP051263.1"/>
</dbReference>
<dbReference type="SMR" id="P0A6Z4"/>
<dbReference type="STRING" id="199310.c0593"/>
<dbReference type="GeneID" id="93776977"/>
<dbReference type="KEGG" id="ecc:c0593"/>
<dbReference type="eggNOG" id="COG0326">
    <property type="taxonomic scope" value="Bacteria"/>
</dbReference>
<dbReference type="HOGENOM" id="CLU_006684_3_0_6"/>
<dbReference type="BioCyc" id="ECOL199310:C0593-MONOMER"/>
<dbReference type="Proteomes" id="UP000001410">
    <property type="component" value="Chromosome"/>
</dbReference>
<dbReference type="GO" id="GO:0005737">
    <property type="term" value="C:cytoplasm"/>
    <property type="evidence" value="ECO:0007669"/>
    <property type="project" value="UniProtKB-SubCell"/>
</dbReference>
<dbReference type="GO" id="GO:0005524">
    <property type="term" value="F:ATP binding"/>
    <property type="evidence" value="ECO:0007669"/>
    <property type="project" value="UniProtKB-UniRule"/>
</dbReference>
<dbReference type="GO" id="GO:0016887">
    <property type="term" value="F:ATP hydrolysis activity"/>
    <property type="evidence" value="ECO:0007669"/>
    <property type="project" value="InterPro"/>
</dbReference>
<dbReference type="GO" id="GO:0140662">
    <property type="term" value="F:ATP-dependent protein folding chaperone"/>
    <property type="evidence" value="ECO:0007669"/>
    <property type="project" value="InterPro"/>
</dbReference>
<dbReference type="GO" id="GO:0051082">
    <property type="term" value="F:unfolded protein binding"/>
    <property type="evidence" value="ECO:0007669"/>
    <property type="project" value="UniProtKB-UniRule"/>
</dbReference>
<dbReference type="CDD" id="cd16927">
    <property type="entry name" value="HATPase_Hsp90-like"/>
    <property type="match status" value="1"/>
</dbReference>
<dbReference type="FunFam" id="1.20.120.790:FF:000002">
    <property type="entry name" value="Molecular chaperone HtpG"/>
    <property type="match status" value="1"/>
</dbReference>
<dbReference type="FunFam" id="3.30.230.80:FF:000002">
    <property type="entry name" value="Molecular chaperone HtpG"/>
    <property type="match status" value="1"/>
</dbReference>
<dbReference type="FunFam" id="3.30.565.10:FF:000009">
    <property type="entry name" value="Molecular chaperone HtpG"/>
    <property type="match status" value="1"/>
</dbReference>
<dbReference type="FunFam" id="3.40.50.11260:FF:000002">
    <property type="entry name" value="Molecular chaperone HtpG"/>
    <property type="match status" value="1"/>
</dbReference>
<dbReference type="Gene3D" id="3.30.230.80">
    <property type="match status" value="1"/>
</dbReference>
<dbReference type="Gene3D" id="3.40.50.11260">
    <property type="match status" value="1"/>
</dbReference>
<dbReference type="Gene3D" id="1.20.120.790">
    <property type="entry name" value="Heat shock protein 90, C-terminal domain"/>
    <property type="match status" value="1"/>
</dbReference>
<dbReference type="Gene3D" id="3.30.565.10">
    <property type="entry name" value="Histidine kinase-like ATPase, C-terminal domain"/>
    <property type="match status" value="1"/>
</dbReference>
<dbReference type="HAMAP" id="MF_00505">
    <property type="entry name" value="HSP90"/>
    <property type="match status" value="1"/>
</dbReference>
<dbReference type="InterPro" id="IPR036890">
    <property type="entry name" value="HATPase_C_sf"/>
</dbReference>
<dbReference type="InterPro" id="IPR019805">
    <property type="entry name" value="Heat_shock_protein_90_CS"/>
</dbReference>
<dbReference type="InterPro" id="IPR037196">
    <property type="entry name" value="HSP90_C"/>
</dbReference>
<dbReference type="InterPro" id="IPR001404">
    <property type="entry name" value="Hsp90_fam"/>
</dbReference>
<dbReference type="InterPro" id="IPR020575">
    <property type="entry name" value="Hsp90_N"/>
</dbReference>
<dbReference type="InterPro" id="IPR020568">
    <property type="entry name" value="Ribosomal_Su5_D2-typ_SF"/>
</dbReference>
<dbReference type="NCBIfam" id="NF003555">
    <property type="entry name" value="PRK05218.1"/>
    <property type="match status" value="1"/>
</dbReference>
<dbReference type="PANTHER" id="PTHR11528">
    <property type="entry name" value="HEAT SHOCK PROTEIN 90 FAMILY MEMBER"/>
    <property type="match status" value="1"/>
</dbReference>
<dbReference type="Pfam" id="PF13589">
    <property type="entry name" value="HATPase_c_3"/>
    <property type="match status" value="1"/>
</dbReference>
<dbReference type="Pfam" id="PF00183">
    <property type="entry name" value="HSP90"/>
    <property type="match status" value="1"/>
</dbReference>
<dbReference type="PIRSF" id="PIRSF002583">
    <property type="entry name" value="Hsp90"/>
    <property type="match status" value="1"/>
</dbReference>
<dbReference type="PRINTS" id="PR00775">
    <property type="entry name" value="HEATSHOCK90"/>
</dbReference>
<dbReference type="SMART" id="SM00387">
    <property type="entry name" value="HATPase_c"/>
    <property type="match status" value="1"/>
</dbReference>
<dbReference type="SUPFAM" id="SSF55874">
    <property type="entry name" value="ATPase domain of HSP90 chaperone/DNA topoisomerase II/histidine kinase"/>
    <property type="match status" value="1"/>
</dbReference>
<dbReference type="SUPFAM" id="SSF110942">
    <property type="entry name" value="HSP90 C-terminal domain"/>
    <property type="match status" value="1"/>
</dbReference>
<dbReference type="SUPFAM" id="SSF54211">
    <property type="entry name" value="Ribosomal protein S5 domain 2-like"/>
    <property type="match status" value="1"/>
</dbReference>
<dbReference type="PROSITE" id="PS00298">
    <property type="entry name" value="HSP90"/>
    <property type="match status" value="1"/>
</dbReference>
<feature type="chain" id="PRO_0000062986" description="Chaperone protein HtpG">
    <location>
        <begin position="1"/>
        <end position="624"/>
    </location>
</feature>
<feature type="region of interest" description="A; substrate-binding" evidence="1">
    <location>
        <begin position="1"/>
        <end position="336"/>
    </location>
</feature>
<feature type="region of interest" description="B" evidence="1">
    <location>
        <begin position="337"/>
        <end position="552"/>
    </location>
</feature>
<feature type="region of interest" description="C" evidence="1">
    <location>
        <begin position="553"/>
        <end position="624"/>
    </location>
</feature>
<protein>
    <recommendedName>
        <fullName evidence="1">Chaperone protein HtpG</fullName>
    </recommendedName>
    <alternativeName>
        <fullName evidence="1">Heat shock protein HtpG</fullName>
    </alternativeName>
    <alternativeName>
        <fullName evidence="1">High temperature protein G</fullName>
    </alternativeName>
</protein>
<name>HTPG_ECOL6</name>